<gene>
    <name evidence="1" type="primary">ihfA</name>
    <name evidence="1" type="synonym">himA</name>
    <name type="ordered locus">PputW619_1973</name>
</gene>
<feature type="chain" id="PRO_1000122155" description="Integration host factor subunit alpha">
    <location>
        <begin position="1"/>
        <end position="100"/>
    </location>
</feature>
<feature type="region of interest" description="Disordered" evidence="2">
    <location>
        <begin position="53"/>
        <end position="72"/>
    </location>
</feature>
<comment type="function">
    <text evidence="1">This protein is one of the two subunits of integration host factor, a specific DNA-binding protein that functions in genetic recombination as well as in transcriptional and translational control.</text>
</comment>
<comment type="subunit">
    <text evidence="1">Heterodimer of an alpha and a beta chain.</text>
</comment>
<comment type="similarity">
    <text evidence="1">Belongs to the bacterial histone-like protein family.</text>
</comment>
<name>IHFA_PSEPW</name>
<protein>
    <recommendedName>
        <fullName evidence="1">Integration host factor subunit alpha</fullName>
        <shortName evidence="1">IHF-alpha</shortName>
    </recommendedName>
</protein>
<reference key="1">
    <citation type="submission" date="2008-02" db="EMBL/GenBank/DDBJ databases">
        <title>Complete sequence of Pseudomonas putida W619.</title>
        <authorList>
            <person name="Copeland A."/>
            <person name="Lucas S."/>
            <person name="Lapidus A."/>
            <person name="Barry K."/>
            <person name="Detter J.C."/>
            <person name="Glavina del Rio T."/>
            <person name="Dalin E."/>
            <person name="Tice H."/>
            <person name="Pitluck S."/>
            <person name="Chain P."/>
            <person name="Malfatti S."/>
            <person name="Shin M."/>
            <person name="Vergez L."/>
            <person name="Schmutz J."/>
            <person name="Larimer F."/>
            <person name="Land M."/>
            <person name="Hauser L."/>
            <person name="Kyrpides N."/>
            <person name="Kim E."/>
            <person name="Taghavi S."/>
            <person name="Vangronsveld D."/>
            <person name="van der Lelie D."/>
            <person name="Richardson P."/>
        </authorList>
    </citation>
    <scope>NUCLEOTIDE SEQUENCE [LARGE SCALE GENOMIC DNA]</scope>
    <source>
        <strain>W619</strain>
    </source>
</reference>
<dbReference type="EMBL" id="CP000949">
    <property type="protein sequence ID" value="ACA72476.1"/>
    <property type="molecule type" value="Genomic_DNA"/>
</dbReference>
<dbReference type="SMR" id="B1J6V0"/>
<dbReference type="STRING" id="390235.PputW619_1973"/>
<dbReference type="KEGG" id="ppw:PputW619_1973"/>
<dbReference type="eggNOG" id="COG0776">
    <property type="taxonomic scope" value="Bacteria"/>
</dbReference>
<dbReference type="HOGENOM" id="CLU_105066_1_3_6"/>
<dbReference type="OrthoDB" id="9797747at2"/>
<dbReference type="GO" id="GO:0005829">
    <property type="term" value="C:cytosol"/>
    <property type="evidence" value="ECO:0007669"/>
    <property type="project" value="TreeGrafter"/>
</dbReference>
<dbReference type="GO" id="GO:0003677">
    <property type="term" value="F:DNA binding"/>
    <property type="evidence" value="ECO:0007669"/>
    <property type="project" value="UniProtKB-UniRule"/>
</dbReference>
<dbReference type="GO" id="GO:0030527">
    <property type="term" value="F:structural constituent of chromatin"/>
    <property type="evidence" value="ECO:0007669"/>
    <property type="project" value="InterPro"/>
</dbReference>
<dbReference type="GO" id="GO:0006310">
    <property type="term" value="P:DNA recombination"/>
    <property type="evidence" value="ECO:0007669"/>
    <property type="project" value="UniProtKB-UniRule"/>
</dbReference>
<dbReference type="GO" id="GO:0009893">
    <property type="term" value="P:positive regulation of metabolic process"/>
    <property type="evidence" value="ECO:0007669"/>
    <property type="project" value="UniProtKB-ARBA"/>
</dbReference>
<dbReference type="GO" id="GO:0006355">
    <property type="term" value="P:regulation of DNA-templated transcription"/>
    <property type="evidence" value="ECO:0007669"/>
    <property type="project" value="UniProtKB-UniRule"/>
</dbReference>
<dbReference type="GO" id="GO:0006417">
    <property type="term" value="P:regulation of translation"/>
    <property type="evidence" value="ECO:0007669"/>
    <property type="project" value="UniProtKB-UniRule"/>
</dbReference>
<dbReference type="CDD" id="cd13835">
    <property type="entry name" value="IHF_A"/>
    <property type="match status" value="1"/>
</dbReference>
<dbReference type="FunFam" id="4.10.520.10:FF:000002">
    <property type="entry name" value="Integration host factor subunit alpha"/>
    <property type="match status" value="1"/>
</dbReference>
<dbReference type="Gene3D" id="4.10.520.10">
    <property type="entry name" value="IHF-like DNA-binding proteins"/>
    <property type="match status" value="1"/>
</dbReference>
<dbReference type="HAMAP" id="MF_00380">
    <property type="entry name" value="IHF_alpha"/>
    <property type="match status" value="1"/>
</dbReference>
<dbReference type="InterPro" id="IPR000119">
    <property type="entry name" value="Hist_DNA-bd"/>
</dbReference>
<dbReference type="InterPro" id="IPR020816">
    <property type="entry name" value="Histone-like_DNA-bd_CS"/>
</dbReference>
<dbReference type="InterPro" id="IPR010992">
    <property type="entry name" value="IHF-like_DNA-bd_dom_sf"/>
</dbReference>
<dbReference type="InterPro" id="IPR005684">
    <property type="entry name" value="IHF_alpha"/>
</dbReference>
<dbReference type="NCBIfam" id="TIGR00987">
    <property type="entry name" value="himA"/>
    <property type="match status" value="1"/>
</dbReference>
<dbReference type="NCBIfam" id="NF001401">
    <property type="entry name" value="PRK00285.1"/>
    <property type="match status" value="1"/>
</dbReference>
<dbReference type="PANTHER" id="PTHR33175">
    <property type="entry name" value="DNA-BINDING PROTEIN HU"/>
    <property type="match status" value="1"/>
</dbReference>
<dbReference type="PANTHER" id="PTHR33175:SF2">
    <property type="entry name" value="INTEGRATION HOST FACTOR SUBUNIT ALPHA"/>
    <property type="match status" value="1"/>
</dbReference>
<dbReference type="Pfam" id="PF00216">
    <property type="entry name" value="Bac_DNA_binding"/>
    <property type="match status" value="1"/>
</dbReference>
<dbReference type="PRINTS" id="PR01727">
    <property type="entry name" value="DNABINDINGHU"/>
</dbReference>
<dbReference type="SMART" id="SM00411">
    <property type="entry name" value="BHL"/>
    <property type="match status" value="1"/>
</dbReference>
<dbReference type="SUPFAM" id="SSF47729">
    <property type="entry name" value="IHF-like DNA-binding proteins"/>
    <property type="match status" value="1"/>
</dbReference>
<dbReference type="PROSITE" id="PS00045">
    <property type="entry name" value="HISTONE_LIKE"/>
    <property type="match status" value="1"/>
</dbReference>
<sequence>MGALTKAEMAERLYEELGLNKREAKELVELFFEEIRHALEENEQVKLSGFGNFDLRDKRQRPGRNPKTGEEIPITARRVVTFRPGQKLKARVEAYAGTKP</sequence>
<accession>B1J6V0</accession>
<keyword id="KW-0233">DNA recombination</keyword>
<keyword id="KW-0238">DNA-binding</keyword>
<keyword id="KW-0804">Transcription</keyword>
<keyword id="KW-0805">Transcription regulation</keyword>
<keyword id="KW-0810">Translation regulation</keyword>
<evidence type="ECO:0000255" key="1">
    <source>
        <dbReference type="HAMAP-Rule" id="MF_00380"/>
    </source>
</evidence>
<evidence type="ECO:0000256" key="2">
    <source>
        <dbReference type="SAM" id="MobiDB-lite"/>
    </source>
</evidence>
<organism>
    <name type="scientific">Pseudomonas putida (strain W619)</name>
    <dbReference type="NCBI Taxonomy" id="390235"/>
    <lineage>
        <taxon>Bacteria</taxon>
        <taxon>Pseudomonadati</taxon>
        <taxon>Pseudomonadota</taxon>
        <taxon>Gammaproteobacteria</taxon>
        <taxon>Pseudomonadales</taxon>
        <taxon>Pseudomonadaceae</taxon>
        <taxon>Pseudomonas</taxon>
    </lineage>
</organism>
<proteinExistence type="inferred from homology"/>